<feature type="chain" id="PRO_0000047537" description="Zinc finger protein 334">
    <location>
        <begin position="1"/>
        <end position="680"/>
    </location>
</feature>
<feature type="domain" description="KRAB" evidence="2">
    <location>
        <begin position="10"/>
        <end position="81"/>
    </location>
</feature>
<feature type="zinc finger region" description="C2H2-type 1" evidence="1">
    <location>
        <begin position="237"/>
        <end position="259"/>
    </location>
</feature>
<feature type="zinc finger region" description="C2H2-type 2" evidence="1">
    <location>
        <begin position="265"/>
        <end position="287"/>
    </location>
</feature>
<feature type="zinc finger region" description="C2H2-type 3" evidence="1">
    <location>
        <begin position="293"/>
        <end position="315"/>
    </location>
</feature>
<feature type="zinc finger region" description="C2H2-type 4" evidence="1">
    <location>
        <begin position="321"/>
        <end position="343"/>
    </location>
</feature>
<feature type="zinc finger region" description="C2H2-type 5" evidence="1">
    <location>
        <begin position="349"/>
        <end position="371"/>
    </location>
</feature>
<feature type="zinc finger region" description="C2H2-type 6" evidence="1">
    <location>
        <begin position="377"/>
        <end position="399"/>
    </location>
</feature>
<feature type="zinc finger region" description="C2H2-type 7" evidence="1">
    <location>
        <begin position="405"/>
        <end position="427"/>
    </location>
</feature>
<feature type="zinc finger region" description="C2H2-type 8" evidence="1">
    <location>
        <begin position="433"/>
        <end position="455"/>
    </location>
</feature>
<feature type="zinc finger region" description="C2H2-type 9" evidence="1">
    <location>
        <begin position="461"/>
        <end position="483"/>
    </location>
</feature>
<feature type="zinc finger region" description="C2H2-type 10" evidence="1">
    <location>
        <begin position="544"/>
        <end position="566"/>
    </location>
</feature>
<feature type="zinc finger region" description="C2H2-type 11" evidence="1">
    <location>
        <begin position="572"/>
        <end position="594"/>
    </location>
</feature>
<feature type="zinc finger region" description="C2H2-type 12" evidence="1">
    <location>
        <begin position="600"/>
        <end position="622"/>
    </location>
</feature>
<feature type="zinc finger region" description="C2H2-type 13" evidence="1">
    <location>
        <begin position="628"/>
        <end position="650"/>
    </location>
</feature>
<feature type="zinc finger region" description="C2H2-type 14" evidence="1">
    <location>
        <begin position="656"/>
        <end position="678"/>
    </location>
</feature>
<feature type="sequence variant" id="VAR_052813" description="In dbSNP:rs3764690.">
    <original>N</original>
    <variation>S</variation>
    <location>
        <position position="547"/>
    </location>
</feature>
<feature type="sequence conflict" description="In Ref. 1; BAA91630." evidence="3" ref="1">
    <original>K</original>
    <variation>E</variation>
    <location>
        <position position="118"/>
    </location>
</feature>
<feature type="sequence conflict" description="In Ref. 1; BAA91630." evidence="3" ref="1">
    <original>S</original>
    <variation>G</variation>
    <location>
        <position position="426"/>
    </location>
</feature>
<comment type="function">
    <text>May be involved in transcriptional regulation.</text>
</comment>
<comment type="interaction">
    <interactant intactId="EBI-748965">
        <id>Q9HCZ1</id>
    </interactant>
    <interactant intactId="EBI-748961">
        <id>O95273</id>
        <label>CCNDBP1</label>
    </interactant>
    <organismsDiffer>false</organismsDiffer>
    <experiments>4</experiments>
</comment>
<comment type="subcellular location">
    <subcellularLocation>
        <location evidence="3">Nucleus</location>
    </subcellularLocation>
</comment>
<comment type="similarity">
    <text evidence="3">Belongs to the krueppel C2H2-type zinc-finger protein family.</text>
</comment>
<proteinExistence type="evidence at protein level"/>
<sequence length="680" mass="79649">MKMKKFQIPVSFQDLTVNFTQEEWQQLDPAQRLLYRDVMLENYSNLVSVGYHVSKPDVIFKLEQGEEPWIVEEFSNQNYPDIDDALEKNKEIQDKHLTQTVFFSNKTLITERENVFGKTLNLGMNSVPSRKMPYKCNPGGNSLKTNSEVIVAKKSKENRKIPDGYSGFGKHEKSHLGMKKYRYNPMRKASNQNENLILHQNIQILKQPFDYNKCGKTFFKRAILITQKGRQTERKPNECNECRKTFSKRSTLIVHQRIHTGEKPYVCSDCRKTFRVKTSLTRHRRIHTGERPYECSECRKTFIDKSALIVHQKIHGGEKSYECNECGKTFFRKSALAEHFRSHTGEKPYECKECGNAFSKKSYLVVHQRTHRGEKPNECKECGKTFFCQSALTAHQRIHTGEKPYECSECEKTFFCQSALNVHRRSHTGEKPYECSQCGKFLCTKSALIAHQITHRGKKSYECNECGKFFCHKSTLTIHQRTHTGEKHGVFNKCGRISIVKSNCSQCKRMNTKENLYECSEHGHAVSKNSHLIVHQRTIWERPYECNECGRTYCRKSALTHHQRTHTGQRPYECNECGKTFCQKFSFVEHQRTHTGEKPYECNECGKSFCHKSAFRVHRRIHTGEKPYECNQCGKTYRRLWTLTEHQKIHTGEKPYECNKCEKTFRHKSNFLLHQKSHKE</sequence>
<reference key="1">
    <citation type="journal article" date="2004" name="Nat. Genet.">
        <title>Complete sequencing and characterization of 21,243 full-length human cDNAs.</title>
        <authorList>
            <person name="Ota T."/>
            <person name="Suzuki Y."/>
            <person name="Nishikawa T."/>
            <person name="Otsuki T."/>
            <person name="Sugiyama T."/>
            <person name="Irie R."/>
            <person name="Wakamatsu A."/>
            <person name="Hayashi K."/>
            <person name="Sato H."/>
            <person name="Nagai K."/>
            <person name="Kimura K."/>
            <person name="Makita H."/>
            <person name="Sekine M."/>
            <person name="Obayashi M."/>
            <person name="Nishi T."/>
            <person name="Shibahara T."/>
            <person name="Tanaka T."/>
            <person name="Ishii S."/>
            <person name="Yamamoto J."/>
            <person name="Saito K."/>
            <person name="Kawai Y."/>
            <person name="Isono Y."/>
            <person name="Nakamura Y."/>
            <person name="Nagahari K."/>
            <person name="Murakami K."/>
            <person name="Yasuda T."/>
            <person name="Iwayanagi T."/>
            <person name="Wagatsuma M."/>
            <person name="Shiratori A."/>
            <person name="Sudo H."/>
            <person name="Hosoiri T."/>
            <person name="Kaku Y."/>
            <person name="Kodaira H."/>
            <person name="Kondo H."/>
            <person name="Sugawara M."/>
            <person name="Takahashi M."/>
            <person name="Kanda K."/>
            <person name="Yokoi T."/>
            <person name="Furuya T."/>
            <person name="Kikkawa E."/>
            <person name="Omura Y."/>
            <person name="Abe K."/>
            <person name="Kamihara K."/>
            <person name="Katsuta N."/>
            <person name="Sato K."/>
            <person name="Tanikawa M."/>
            <person name="Yamazaki M."/>
            <person name="Ninomiya K."/>
            <person name="Ishibashi T."/>
            <person name="Yamashita H."/>
            <person name="Murakawa K."/>
            <person name="Fujimori K."/>
            <person name="Tanai H."/>
            <person name="Kimata M."/>
            <person name="Watanabe M."/>
            <person name="Hiraoka S."/>
            <person name="Chiba Y."/>
            <person name="Ishida S."/>
            <person name="Ono Y."/>
            <person name="Takiguchi S."/>
            <person name="Watanabe S."/>
            <person name="Yosida M."/>
            <person name="Hotuta T."/>
            <person name="Kusano J."/>
            <person name="Kanehori K."/>
            <person name="Takahashi-Fujii A."/>
            <person name="Hara H."/>
            <person name="Tanase T.-O."/>
            <person name="Nomura Y."/>
            <person name="Togiya S."/>
            <person name="Komai F."/>
            <person name="Hara R."/>
            <person name="Takeuchi K."/>
            <person name="Arita M."/>
            <person name="Imose N."/>
            <person name="Musashino K."/>
            <person name="Yuuki H."/>
            <person name="Oshima A."/>
            <person name="Sasaki N."/>
            <person name="Aotsuka S."/>
            <person name="Yoshikawa Y."/>
            <person name="Matsunawa H."/>
            <person name="Ichihara T."/>
            <person name="Shiohata N."/>
            <person name="Sano S."/>
            <person name="Moriya S."/>
            <person name="Momiyama H."/>
            <person name="Satoh N."/>
            <person name="Takami S."/>
            <person name="Terashima Y."/>
            <person name="Suzuki O."/>
            <person name="Nakagawa S."/>
            <person name="Senoh A."/>
            <person name="Mizoguchi H."/>
            <person name="Goto Y."/>
            <person name="Shimizu F."/>
            <person name="Wakebe H."/>
            <person name="Hishigaki H."/>
            <person name="Watanabe T."/>
            <person name="Sugiyama A."/>
            <person name="Takemoto M."/>
            <person name="Kawakami B."/>
            <person name="Yamazaki M."/>
            <person name="Watanabe K."/>
            <person name="Kumagai A."/>
            <person name="Itakura S."/>
            <person name="Fukuzumi Y."/>
            <person name="Fujimori Y."/>
            <person name="Komiyama M."/>
            <person name="Tashiro H."/>
            <person name="Tanigami A."/>
            <person name="Fujiwara T."/>
            <person name="Ono T."/>
            <person name="Yamada K."/>
            <person name="Fujii Y."/>
            <person name="Ozaki K."/>
            <person name="Hirao M."/>
            <person name="Ohmori Y."/>
            <person name="Kawabata A."/>
            <person name="Hikiji T."/>
            <person name="Kobatake N."/>
            <person name="Inagaki H."/>
            <person name="Ikema Y."/>
            <person name="Okamoto S."/>
            <person name="Okitani R."/>
            <person name="Kawakami T."/>
            <person name="Noguchi S."/>
            <person name="Itoh T."/>
            <person name="Shigeta K."/>
            <person name="Senba T."/>
            <person name="Matsumura K."/>
            <person name="Nakajima Y."/>
            <person name="Mizuno T."/>
            <person name="Morinaga M."/>
            <person name="Sasaki M."/>
            <person name="Togashi T."/>
            <person name="Oyama M."/>
            <person name="Hata H."/>
            <person name="Watanabe M."/>
            <person name="Komatsu T."/>
            <person name="Mizushima-Sugano J."/>
            <person name="Satoh T."/>
            <person name="Shirai Y."/>
            <person name="Takahashi Y."/>
            <person name="Nakagawa K."/>
            <person name="Okumura K."/>
            <person name="Nagase T."/>
            <person name="Nomura N."/>
            <person name="Kikuchi H."/>
            <person name="Masuho Y."/>
            <person name="Yamashita R."/>
            <person name="Nakai K."/>
            <person name="Yada T."/>
            <person name="Nakamura Y."/>
            <person name="Ohara O."/>
            <person name="Isogai T."/>
            <person name="Sugano S."/>
        </authorList>
    </citation>
    <scope>NUCLEOTIDE SEQUENCE [LARGE SCALE MRNA]</scope>
</reference>
<reference key="2">
    <citation type="journal article" date="2001" name="Nature">
        <title>The DNA sequence and comparative analysis of human chromosome 20.</title>
        <authorList>
            <person name="Deloukas P."/>
            <person name="Matthews L.H."/>
            <person name="Ashurst J.L."/>
            <person name="Burton J."/>
            <person name="Gilbert J.G.R."/>
            <person name="Jones M."/>
            <person name="Stavrides G."/>
            <person name="Almeida J.P."/>
            <person name="Babbage A.K."/>
            <person name="Bagguley C.L."/>
            <person name="Bailey J."/>
            <person name="Barlow K.F."/>
            <person name="Bates K.N."/>
            <person name="Beard L.M."/>
            <person name="Beare D.M."/>
            <person name="Beasley O.P."/>
            <person name="Bird C.P."/>
            <person name="Blakey S.E."/>
            <person name="Bridgeman A.M."/>
            <person name="Brown A.J."/>
            <person name="Buck D."/>
            <person name="Burrill W.D."/>
            <person name="Butler A.P."/>
            <person name="Carder C."/>
            <person name="Carter N.P."/>
            <person name="Chapman J.C."/>
            <person name="Clamp M."/>
            <person name="Clark G."/>
            <person name="Clark L.N."/>
            <person name="Clark S.Y."/>
            <person name="Clee C.M."/>
            <person name="Clegg S."/>
            <person name="Cobley V.E."/>
            <person name="Collier R.E."/>
            <person name="Connor R.E."/>
            <person name="Corby N.R."/>
            <person name="Coulson A."/>
            <person name="Coville G.J."/>
            <person name="Deadman R."/>
            <person name="Dhami P.D."/>
            <person name="Dunn M."/>
            <person name="Ellington A.G."/>
            <person name="Frankland J.A."/>
            <person name="Fraser A."/>
            <person name="French L."/>
            <person name="Garner P."/>
            <person name="Grafham D.V."/>
            <person name="Griffiths C."/>
            <person name="Griffiths M.N.D."/>
            <person name="Gwilliam R."/>
            <person name="Hall R.E."/>
            <person name="Hammond S."/>
            <person name="Harley J.L."/>
            <person name="Heath P.D."/>
            <person name="Ho S."/>
            <person name="Holden J.L."/>
            <person name="Howden P.J."/>
            <person name="Huckle E."/>
            <person name="Hunt A.R."/>
            <person name="Hunt S.E."/>
            <person name="Jekosch K."/>
            <person name="Johnson C.M."/>
            <person name="Johnson D."/>
            <person name="Kay M.P."/>
            <person name="Kimberley A.M."/>
            <person name="King A."/>
            <person name="Knights A."/>
            <person name="Laird G.K."/>
            <person name="Lawlor S."/>
            <person name="Lehvaeslaiho M.H."/>
            <person name="Leversha M.A."/>
            <person name="Lloyd C."/>
            <person name="Lloyd D.M."/>
            <person name="Lovell J.D."/>
            <person name="Marsh V.L."/>
            <person name="Martin S.L."/>
            <person name="McConnachie L.J."/>
            <person name="McLay K."/>
            <person name="McMurray A.A."/>
            <person name="Milne S.A."/>
            <person name="Mistry D."/>
            <person name="Moore M.J.F."/>
            <person name="Mullikin J.C."/>
            <person name="Nickerson T."/>
            <person name="Oliver K."/>
            <person name="Parker A."/>
            <person name="Patel R."/>
            <person name="Pearce T.A.V."/>
            <person name="Peck A.I."/>
            <person name="Phillimore B.J.C.T."/>
            <person name="Prathalingam S.R."/>
            <person name="Plumb R.W."/>
            <person name="Ramsay H."/>
            <person name="Rice C.M."/>
            <person name="Ross M.T."/>
            <person name="Scott C.E."/>
            <person name="Sehra H.K."/>
            <person name="Shownkeen R."/>
            <person name="Sims S."/>
            <person name="Skuce C.D."/>
            <person name="Smith M.L."/>
            <person name="Soderlund C."/>
            <person name="Steward C.A."/>
            <person name="Sulston J.E."/>
            <person name="Swann R.M."/>
            <person name="Sycamore N."/>
            <person name="Taylor R."/>
            <person name="Tee L."/>
            <person name="Thomas D.W."/>
            <person name="Thorpe A."/>
            <person name="Tracey A."/>
            <person name="Tromans A.C."/>
            <person name="Vaudin M."/>
            <person name="Wall M."/>
            <person name="Wallis J.M."/>
            <person name="Whitehead S.L."/>
            <person name="Whittaker P."/>
            <person name="Willey D.L."/>
            <person name="Williams L."/>
            <person name="Williams S.A."/>
            <person name="Wilming L."/>
            <person name="Wray P.W."/>
            <person name="Hubbard T."/>
            <person name="Durbin R.M."/>
            <person name="Bentley D.R."/>
            <person name="Beck S."/>
            <person name="Rogers J."/>
        </authorList>
    </citation>
    <scope>NUCLEOTIDE SEQUENCE [LARGE SCALE GENOMIC DNA]</scope>
</reference>
<reference key="3">
    <citation type="journal article" date="2004" name="Genome Res.">
        <title>The status, quality, and expansion of the NIH full-length cDNA project: the Mammalian Gene Collection (MGC).</title>
        <authorList>
            <consortium name="The MGC Project Team"/>
        </authorList>
    </citation>
    <scope>NUCLEOTIDE SEQUENCE [LARGE SCALE MRNA]</scope>
    <source>
        <tissue>Testis</tissue>
    </source>
</reference>
<gene>
    <name type="primary">ZNF334</name>
</gene>
<name>ZN334_HUMAN</name>
<protein>
    <recommendedName>
        <fullName>Zinc finger protein 334</fullName>
    </recommendedName>
</protein>
<organism>
    <name type="scientific">Homo sapiens</name>
    <name type="common">Human</name>
    <dbReference type="NCBI Taxonomy" id="9606"/>
    <lineage>
        <taxon>Eukaryota</taxon>
        <taxon>Metazoa</taxon>
        <taxon>Chordata</taxon>
        <taxon>Craniata</taxon>
        <taxon>Vertebrata</taxon>
        <taxon>Euteleostomi</taxon>
        <taxon>Mammalia</taxon>
        <taxon>Eutheria</taxon>
        <taxon>Euarchontoglires</taxon>
        <taxon>Primates</taxon>
        <taxon>Haplorrhini</taxon>
        <taxon>Catarrhini</taxon>
        <taxon>Hominidae</taxon>
        <taxon>Homo</taxon>
    </lineage>
</organism>
<dbReference type="EMBL" id="AK001331">
    <property type="protein sequence ID" value="BAA91630.1"/>
    <property type="molecule type" value="mRNA"/>
</dbReference>
<dbReference type="EMBL" id="AL034424">
    <property type="status" value="NOT_ANNOTATED_CDS"/>
    <property type="molecule type" value="Genomic_DNA"/>
</dbReference>
<dbReference type="EMBL" id="AL354745">
    <property type="status" value="NOT_ANNOTATED_CDS"/>
    <property type="molecule type" value="Genomic_DNA"/>
</dbReference>
<dbReference type="EMBL" id="BC024177">
    <property type="protein sequence ID" value="AAH24177.1"/>
    <property type="molecule type" value="mRNA"/>
</dbReference>
<dbReference type="CCDS" id="CCDS33480.1"/>
<dbReference type="RefSeq" id="NP_001340753.1">
    <property type="nucleotide sequence ID" value="NM_001353824.2"/>
</dbReference>
<dbReference type="RefSeq" id="NP_060572.3">
    <property type="nucleotide sequence ID" value="NM_018102.4"/>
</dbReference>
<dbReference type="RefSeq" id="XP_016883425.1">
    <property type="nucleotide sequence ID" value="XM_017027936.1"/>
</dbReference>
<dbReference type="RefSeq" id="XP_016883427.1">
    <property type="nucleotide sequence ID" value="XM_017027938.1"/>
</dbReference>
<dbReference type="RefSeq" id="XP_047296237.1">
    <property type="nucleotide sequence ID" value="XM_047440281.1"/>
</dbReference>
<dbReference type="RefSeq" id="XP_054179642.1">
    <property type="nucleotide sequence ID" value="XM_054323667.1"/>
</dbReference>
<dbReference type="SMR" id="Q9HCZ1"/>
<dbReference type="BioGRID" id="120835">
    <property type="interactions" value="2"/>
</dbReference>
<dbReference type="IntAct" id="Q9HCZ1">
    <property type="interactions" value="3"/>
</dbReference>
<dbReference type="STRING" id="9606.ENSP00000473194"/>
<dbReference type="GlyGen" id="Q9HCZ1">
    <property type="glycosylation" value="1 site, 1 O-linked glycan (1 site)"/>
</dbReference>
<dbReference type="iPTMnet" id="Q9HCZ1"/>
<dbReference type="PhosphoSitePlus" id="Q9HCZ1"/>
<dbReference type="BioMuta" id="ZNF334"/>
<dbReference type="DMDM" id="20141040"/>
<dbReference type="jPOST" id="Q9HCZ1"/>
<dbReference type="MassIVE" id="Q9HCZ1"/>
<dbReference type="PaxDb" id="9606-ENSP00000255129"/>
<dbReference type="PeptideAtlas" id="Q9HCZ1"/>
<dbReference type="ProteomicsDB" id="81808"/>
<dbReference type="Antibodypedia" id="28097">
    <property type="antibodies" value="34 antibodies from 13 providers"/>
</dbReference>
<dbReference type="DNASU" id="55713"/>
<dbReference type="Ensembl" id="ENST00000347606.8">
    <property type="protein sequence ID" value="ENSP00000255129.5"/>
    <property type="gene ID" value="ENSG00000198185.12"/>
</dbReference>
<dbReference type="Ensembl" id="ENST00000692313.1">
    <property type="protein sequence ID" value="ENSP00000510334.1"/>
    <property type="gene ID" value="ENSG00000198185.12"/>
</dbReference>
<dbReference type="GeneID" id="55713"/>
<dbReference type="KEGG" id="hsa:55713"/>
<dbReference type="MANE-Select" id="ENST00000692313.1">
    <property type="protein sequence ID" value="ENSP00000510334.1"/>
    <property type="RefSeq nucleotide sequence ID" value="NM_001353824.2"/>
    <property type="RefSeq protein sequence ID" value="NP_001340753.1"/>
</dbReference>
<dbReference type="UCSC" id="uc002xsc.5">
    <property type="organism name" value="human"/>
</dbReference>
<dbReference type="AGR" id="HGNC:15806"/>
<dbReference type="CTD" id="55713"/>
<dbReference type="DisGeNET" id="55713"/>
<dbReference type="GeneCards" id="ZNF334"/>
<dbReference type="HGNC" id="HGNC:15806">
    <property type="gene designation" value="ZNF334"/>
</dbReference>
<dbReference type="HPA" id="ENSG00000198185">
    <property type="expression patterns" value="Low tissue specificity"/>
</dbReference>
<dbReference type="MIM" id="621017">
    <property type="type" value="gene"/>
</dbReference>
<dbReference type="neXtProt" id="NX_Q9HCZ1"/>
<dbReference type="OpenTargets" id="ENSG00000198185"/>
<dbReference type="PharmGKB" id="PA38040"/>
<dbReference type="VEuPathDB" id="HostDB:ENSG00000198185"/>
<dbReference type="eggNOG" id="KOG1721">
    <property type="taxonomic scope" value="Eukaryota"/>
</dbReference>
<dbReference type="GeneTree" id="ENSGT00940000163620"/>
<dbReference type="HOGENOM" id="CLU_002678_0_12_1"/>
<dbReference type="InParanoid" id="Q9HCZ1"/>
<dbReference type="OMA" id="HKYDPGG"/>
<dbReference type="OrthoDB" id="6077919at2759"/>
<dbReference type="PAN-GO" id="Q9HCZ1">
    <property type="GO annotations" value="4 GO annotations based on evolutionary models"/>
</dbReference>
<dbReference type="PhylomeDB" id="Q9HCZ1"/>
<dbReference type="TreeFam" id="TF337898"/>
<dbReference type="PathwayCommons" id="Q9HCZ1"/>
<dbReference type="Reactome" id="R-HSA-212436">
    <property type="pathway name" value="Generic Transcription Pathway"/>
</dbReference>
<dbReference type="SignaLink" id="Q9HCZ1"/>
<dbReference type="BioGRID-ORCS" id="55713">
    <property type="hits" value="9 hits in 1173 CRISPR screens"/>
</dbReference>
<dbReference type="ChiTaRS" id="ZNF334">
    <property type="organism name" value="human"/>
</dbReference>
<dbReference type="GenomeRNAi" id="55713"/>
<dbReference type="Pharos" id="Q9HCZ1">
    <property type="development level" value="Tdark"/>
</dbReference>
<dbReference type="PRO" id="PR:Q9HCZ1"/>
<dbReference type="Proteomes" id="UP000005640">
    <property type="component" value="Chromosome 20"/>
</dbReference>
<dbReference type="RNAct" id="Q9HCZ1">
    <property type="molecule type" value="protein"/>
</dbReference>
<dbReference type="Bgee" id="ENSG00000198185">
    <property type="expression patterns" value="Expressed in right uterine tube and 114 other cell types or tissues"/>
</dbReference>
<dbReference type="ExpressionAtlas" id="Q9HCZ1">
    <property type="expression patterns" value="baseline and differential"/>
</dbReference>
<dbReference type="GO" id="GO:0005634">
    <property type="term" value="C:nucleus"/>
    <property type="evidence" value="ECO:0000318"/>
    <property type="project" value="GO_Central"/>
</dbReference>
<dbReference type="GO" id="GO:0000981">
    <property type="term" value="F:DNA-binding transcription factor activity, RNA polymerase II-specific"/>
    <property type="evidence" value="ECO:0000318"/>
    <property type="project" value="GO_Central"/>
</dbReference>
<dbReference type="GO" id="GO:0000978">
    <property type="term" value="F:RNA polymerase II cis-regulatory region sequence-specific DNA binding"/>
    <property type="evidence" value="ECO:0000318"/>
    <property type="project" value="GO_Central"/>
</dbReference>
<dbReference type="GO" id="GO:0008270">
    <property type="term" value="F:zinc ion binding"/>
    <property type="evidence" value="ECO:0007669"/>
    <property type="project" value="UniProtKB-KW"/>
</dbReference>
<dbReference type="GO" id="GO:0006357">
    <property type="term" value="P:regulation of transcription by RNA polymerase II"/>
    <property type="evidence" value="ECO:0000318"/>
    <property type="project" value="GO_Central"/>
</dbReference>
<dbReference type="CDD" id="cd07765">
    <property type="entry name" value="KRAB_A-box"/>
    <property type="match status" value="1"/>
</dbReference>
<dbReference type="FunFam" id="3.30.160.60:FF:000295">
    <property type="entry name" value="zinc finger protein 19"/>
    <property type="match status" value="2"/>
</dbReference>
<dbReference type="FunFam" id="3.30.160.60:FF:001543">
    <property type="entry name" value="Zinc finger protein 334"/>
    <property type="match status" value="2"/>
</dbReference>
<dbReference type="FunFam" id="3.30.160.60:FF:002253">
    <property type="entry name" value="Zinc finger protein 334"/>
    <property type="match status" value="1"/>
</dbReference>
<dbReference type="FunFam" id="3.30.160.60:FF:001355">
    <property type="entry name" value="zinc finger protein 334"/>
    <property type="match status" value="1"/>
</dbReference>
<dbReference type="FunFam" id="3.30.160.60:FF:002343">
    <property type="entry name" value="Zinc finger protein 33A"/>
    <property type="match status" value="2"/>
</dbReference>
<dbReference type="FunFam" id="3.30.160.60:FF:000135">
    <property type="entry name" value="Zinc finger protein 358"/>
    <property type="match status" value="1"/>
</dbReference>
<dbReference type="FunFam" id="3.30.160.60:FF:000060">
    <property type="entry name" value="zinc finger protein 436"/>
    <property type="match status" value="3"/>
</dbReference>
<dbReference type="FunFam" id="3.30.160.60:FF:001462">
    <property type="entry name" value="Zinc finger protein 502, isoform CRA_a"/>
    <property type="match status" value="2"/>
</dbReference>
<dbReference type="Gene3D" id="6.10.140.140">
    <property type="match status" value="1"/>
</dbReference>
<dbReference type="Gene3D" id="3.30.160.60">
    <property type="entry name" value="Classic Zinc Finger"/>
    <property type="match status" value="15"/>
</dbReference>
<dbReference type="InterPro" id="IPR001909">
    <property type="entry name" value="KRAB"/>
</dbReference>
<dbReference type="InterPro" id="IPR036051">
    <property type="entry name" value="KRAB_dom_sf"/>
</dbReference>
<dbReference type="InterPro" id="IPR036236">
    <property type="entry name" value="Znf_C2H2_sf"/>
</dbReference>
<dbReference type="InterPro" id="IPR013087">
    <property type="entry name" value="Znf_C2H2_type"/>
</dbReference>
<dbReference type="PANTHER" id="PTHR24393">
    <property type="entry name" value="ZINC FINGER PROTEIN"/>
    <property type="match status" value="1"/>
</dbReference>
<dbReference type="PANTHER" id="PTHR24393:SF159">
    <property type="entry name" value="ZINC FINGER PROTEIN 345-RELATED"/>
    <property type="match status" value="1"/>
</dbReference>
<dbReference type="Pfam" id="PF01352">
    <property type="entry name" value="KRAB"/>
    <property type="match status" value="1"/>
</dbReference>
<dbReference type="Pfam" id="PF00096">
    <property type="entry name" value="zf-C2H2"/>
    <property type="match status" value="13"/>
</dbReference>
<dbReference type="Pfam" id="PF13912">
    <property type="entry name" value="zf-C2H2_6"/>
    <property type="match status" value="1"/>
</dbReference>
<dbReference type="SMART" id="SM00349">
    <property type="entry name" value="KRAB"/>
    <property type="match status" value="1"/>
</dbReference>
<dbReference type="SMART" id="SM00355">
    <property type="entry name" value="ZnF_C2H2"/>
    <property type="match status" value="14"/>
</dbReference>
<dbReference type="SUPFAM" id="SSF57667">
    <property type="entry name" value="beta-beta-alpha zinc fingers"/>
    <property type="match status" value="10"/>
</dbReference>
<dbReference type="SUPFAM" id="SSF109640">
    <property type="entry name" value="KRAB domain (Kruppel-associated box)"/>
    <property type="match status" value="1"/>
</dbReference>
<dbReference type="PROSITE" id="PS50805">
    <property type="entry name" value="KRAB"/>
    <property type="match status" value="1"/>
</dbReference>
<dbReference type="PROSITE" id="PS00028">
    <property type="entry name" value="ZINC_FINGER_C2H2_1"/>
    <property type="match status" value="14"/>
</dbReference>
<dbReference type="PROSITE" id="PS50157">
    <property type="entry name" value="ZINC_FINGER_C2H2_2"/>
    <property type="match status" value="14"/>
</dbReference>
<accession>Q9HCZ1</accession>
<accession>Q5T6U2</accession>
<accession>Q9NVW4</accession>
<evidence type="ECO:0000255" key="1">
    <source>
        <dbReference type="PROSITE-ProRule" id="PRU00042"/>
    </source>
</evidence>
<evidence type="ECO:0000255" key="2">
    <source>
        <dbReference type="PROSITE-ProRule" id="PRU00119"/>
    </source>
</evidence>
<evidence type="ECO:0000305" key="3"/>
<keyword id="KW-0238">DNA-binding</keyword>
<keyword id="KW-0479">Metal-binding</keyword>
<keyword id="KW-0539">Nucleus</keyword>
<keyword id="KW-1267">Proteomics identification</keyword>
<keyword id="KW-1185">Reference proteome</keyword>
<keyword id="KW-0677">Repeat</keyword>
<keyword id="KW-0804">Transcription</keyword>
<keyword id="KW-0805">Transcription regulation</keyword>
<keyword id="KW-0862">Zinc</keyword>
<keyword id="KW-0863">Zinc-finger</keyword>